<keyword id="KW-0963">Cytoplasm</keyword>
<keyword id="KW-0274">FAD</keyword>
<keyword id="KW-0285">Flavoprotein</keyword>
<keyword id="KW-0520">NAD</keyword>
<keyword id="KW-0819">tRNA processing</keyword>
<dbReference type="EMBL" id="AE014291">
    <property type="protein sequence ID" value="AAN30951.1"/>
    <property type="molecule type" value="Genomic_DNA"/>
</dbReference>
<dbReference type="EMBL" id="CP002997">
    <property type="protein sequence ID" value="AEM19368.1"/>
    <property type="molecule type" value="Genomic_DNA"/>
</dbReference>
<dbReference type="RefSeq" id="WP_006132991.1">
    <property type="nucleotide sequence ID" value="NZ_KN046804.1"/>
</dbReference>
<dbReference type="SMR" id="Q8FY28"/>
<dbReference type="GeneID" id="55591631"/>
<dbReference type="KEGG" id="bms:BR2061"/>
<dbReference type="KEGG" id="bsi:BS1330_I2055"/>
<dbReference type="PATRIC" id="fig|204722.21.peg.1266"/>
<dbReference type="HOGENOM" id="CLU_007831_2_2_5"/>
<dbReference type="PhylomeDB" id="Q8FY28"/>
<dbReference type="Proteomes" id="UP000007104">
    <property type="component" value="Chromosome I"/>
</dbReference>
<dbReference type="GO" id="GO:0005829">
    <property type="term" value="C:cytosol"/>
    <property type="evidence" value="ECO:0007669"/>
    <property type="project" value="TreeGrafter"/>
</dbReference>
<dbReference type="GO" id="GO:0050660">
    <property type="term" value="F:flavin adenine dinucleotide binding"/>
    <property type="evidence" value="ECO:0007669"/>
    <property type="project" value="UniProtKB-UniRule"/>
</dbReference>
<dbReference type="GO" id="GO:0030488">
    <property type="term" value="P:tRNA methylation"/>
    <property type="evidence" value="ECO:0007669"/>
    <property type="project" value="TreeGrafter"/>
</dbReference>
<dbReference type="GO" id="GO:0002098">
    <property type="term" value="P:tRNA wobble uridine modification"/>
    <property type="evidence" value="ECO:0007669"/>
    <property type="project" value="InterPro"/>
</dbReference>
<dbReference type="FunFam" id="3.50.50.60:FF:000145">
    <property type="entry name" value="tRNA uridine 5-carboxymethylaminomethyl modification enzyme"/>
    <property type="match status" value="1"/>
</dbReference>
<dbReference type="FunFam" id="1.10.150.570:FF:000001">
    <property type="entry name" value="tRNA uridine 5-carboxymethylaminomethyl modification enzyme MnmG"/>
    <property type="match status" value="1"/>
</dbReference>
<dbReference type="FunFam" id="3.50.50.60:FF:000002">
    <property type="entry name" value="tRNA uridine 5-carboxymethylaminomethyl modification enzyme MnmG"/>
    <property type="match status" value="1"/>
</dbReference>
<dbReference type="Gene3D" id="3.50.50.60">
    <property type="entry name" value="FAD/NAD(P)-binding domain"/>
    <property type="match status" value="2"/>
</dbReference>
<dbReference type="Gene3D" id="1.10.150.570">
    <property type="entry name" value="GidA associated domain, C-terminal subdomain"/>
    <property type="match status" value="1"/>
</dbReference>
<dbReference type="Gene3D" id="1.10.10.1800">
    <property type="entry name" value="tRNA uridine 5-carboxymethylaminomethyl modification enzyme MnmG/GidA"/>
    <property type="match status" value="1"/>
</dbReference>
<dbReference type="HAMAP" id="MF_00129">
    <property type="entry name" value="MnmG_GidA"/>
    <property type="match status" value="1"/>
</dbReference>
<dbReference type="InterPro" id="IPR036188">
    <property type="entry name" value="FAD/NAD-bd_sf"/>
</dbReference>
<dbReference type="InterPro" id="IPR049312">
    <property type="entry name" value="GIDA_C_N"/>
</dbReference>
<dbReference type="InterPro" id="IPR004416">
    <property type="entry name" value="MnmG"/>
</dbReference>
<dbReference type="InterPro" id="IPR002218">
    <property type="entry name" value="MnmG-rel"/>
</dbReference>
<dbReference type="InterPro" id="IPR020595">
    <property type="entry name" value="MnmG-rel_CS"/>
</dbReference>
<dbReference type="InterPro" id="IPR026904">
    <property type="entry name" value="MnmG_C"/>
</dbReference>
<dbReference type="InterPro" id="IPR047001">
    <property type="entry name" value="MnmG_C_subdom"/>
</dbReference>
<dbReference type="InterPro" id="IPR044920">
    <property type="entry name" value="MnmG_C_subdom_sf"/>
</dbReference>
<dbReference type="InterPro" id="IPR040131">
    <property type="entry name" value="MnmG_N"/>
</dbReference>
<dbReference type="NCBIfam" id="TIGR00136">
    <property type="entry name" value="mnmG_gidA"/>
    <property type="match status" value="1"/>
</dbReference>
<dbReference type="PANTHER" id="PTHR11806">
    <property type="entry name" value="GLUCOSE INHIBITED DIVISION PROTEIN A"/>
    <property type="match status" value="1"/>
</dbReference>
<dbReference type="PANTHER" id="PTHR11806:SF0">
    <property type="entry name" value="PROTEIN MTO1 HOMOLOG, MITOCHONDRIAL"/>
    <property type="match status" value="1"/>
</dbReference>
<dbReference type="Pfam" id="PF01134">
    <property type="entry name" value="GIDA"/>
    <property type="match status" value="1"/>
</dbReference>
<dbReference type="Pfam" id="PF21680">
    <property type="entry name" value="GIDA_C_1st"/>
    <property type="match status" value="1"/>
</dbReference>
<dbReference type="Pfam" id="PF13932">
    <property type="entry name" value="SAM_GIDA_C"/>
    <property type="match status" value="1"/>
</dbReference>
<dbReference type="SMART" id="SM01228">
    <property type="entry name" value="GIDA_assoc_3"/>
    <property type="match status" value="1"/>
</dbReference>
<dbReference type="SUPFAM" id="SSF51905">
    <property type="entry name" value="FAD/NAD(P)-binding domain"/>
    <property type="match status" value="1"/>
</dbReference>
<dbReference type="PROSITE" id="PS01280">
    <property type="entry name" value="GIDA_1"/>
    <property type="match status" value="1"/>
</dbReference>
<dbReference type="PROSITE" id="PS01281">
    <property type="entry name" value="GIDA_2"/>
    <property type="match status" value="1"/>
</dbReference>
<proteinExistence type="inferred from homology"/>
<name>MNMG_BRUSU</name>
<sequence length="636" mass="69431">MSSAEALAFDVIVIGGGHAGCEAASAAARAGARTALVTHRFDTIGVMSCNPAIGGLGKGHLVREIDALDGLMGRVADRAGIQFRLLNRRKGPAVRGPRTQADRKLYRLAMQQMITEQENLTVVEGGAADLVCDGERISGVTLADGRVLKCGAVVLTTGTFLNGLIHIGEKRFPAGRMGEKPALGLSERLLSFGFTLGRLKTGTPPRLDGRTIDWQSLDMQSADEEPVPFSLMTDRITTPQIECGITRTTPETHDIIRANLHRSAMYSGSIEGIGPRYCPSVEDKIVKFGDRDGHQIFLEPEGLDDDTVYPNGISTSLPEDVQLEILKTIPGLEKAVLLQPGYAIEYDFIDPRELKRSLETRKVCGLFLAGQINGTTGYEEAGAQGLLAGLNAARRAAGSEPVILQRTEAYIGVMVDDLTSRGVSEPYRMFTSRAEFRLSLRADNADQRLTPLADEVGILSKERRKRYLTRETALSHARMVTQSLSITPNLAGYYDLRLNQDGVRRSAYDLLSYPDINLDRLIAIWPELASIDPVTREALEIEAQYAVYMERQQSDIAVMEREERLLIPSGLDFDAISGLSNELKQKLKQRKPETIAEAQRVDGMTPAAVALLIAQIRKFGGRQKLAAETLEGKGAA</sequence>
<organism>
    <name type="scientific">Brucella suis biovar 1 (strain 1330)</name>
    <dbReference type="NCBI Taxonomy" id="204722"/>
    <lineage>
        <taxon>Bacteria</taxon>
        <taxon>Pseudomonadati</taxon>
        <taxon>Pseudomonadota</taxon>
        <taxon>Alphaproteobacteria</taxon>
        <taxon>Hyphomicrobiales</taxon>
        <taxon>Brucellaceae</taxon>
        <taxon>Brucella/Ochrobactrum group</taxon>
        <taxon>Brucella</taxon>
    </lineage>
</organism>
<protein>
    <recommendedName>
        <fullName evidence="1">tRNA uridine 5-carboxymethylaminomethyl modification enzyme MnmG</fullName>
    </recommendedName>
    <alternativeName>
        <fullName evidence="1">Glucose-inhibited division protein A</fullName>
    </alternativeName>
</protein>
<comment type="function">
    <text evidence="1">NAD-binding protein involved in the addition of a carboxymethylaminomethyl (cmnm) group at the wobble position (U34) of certain tRNAs, forming tRNA-cmnm(5)s(2)U34.</text>
</comment>
<comment type="cofactor">
    <cofactor evidence="1">
        <name>FAD</name>
        <dbReference type="ChEBI" id="CHEBI:57692"/>
    </cofactor>
</comment>
<comment type="subunit">
    <text evidence="1">Homodimer. Heterotetramer of two MnmE and two MnmG subunits.</text>
</comment>
<comment type="subcellular location">
    <subcellularLocation>
        <location evidence="1">Cytoplasm</location>
    </subcellularLocation>
</comment>
<comment type="similarity">
    <text evidence="1">Belongs to the MnmG family.</text>
</comment>
<reference key="1">
    <citation type="journal article" date="2002" name="Proc. Natl. Acad. Sci. U.S.A.">
        <title>The Brucella suis genome reveals fundamental similarities between animal and plant pathogens and symbionts.</title>
        <authorList>
            <person name="Paulsen I.T."/>
            <person name="Seshadri R."/>
            <person name="Nelson K.E."/>
            <person name="Eisen J.A."/>
            <person name="Heidelberg J.F."/>
            <person name="Read T.D."/>
            <person name="Dodson R.J."/>
            <person name="Umayam L.A."/>
            <person name="Brinkac L.M."/>
            <person name="Beanan M.J."/>
            <person name="Daugherty S.C."/>
            <person name="DeBoy R.T."/>
            <person name="Durkin A.S."/>
            <person name="Kolonay J.F."/>
            <person name="Madupu R."/>
            <person name="Nelson W.C."/>
            <person name="Ayodeji B."/>
            <person name="Kraul M."/>
            <person name="Shetty J."/>
            <person name="Malek J.A."/>
            <person name="Van Aken S.E."/>
            <person name="Riedmuller S."/>
            <person name="Tettelin H."/>
            <person name="Gill S.R."/>
            <person name="White O."/>
            <person name="Salzberg S.L."/>
            <person name="Hoover D.L."/>
            <person name="Lindler L.E."/>
            <person name="Halling S.M."/>
            <person name="Boyle S.M."/>
            <person name="Fraser C.M."/>
        </authorList>
    </citation>
    <scope>NUCLEOTIDE SEQUENCE [LARGE SCALE GENOMIC DNA]</scope>
    <source>
        <strain>1330</strain>
    </source>
</reference>
<reference key="2">
    <citation type="journal article" date="2011" name="J. Bacteriol.">
        <title>Revised genome sequence of Brucella suis 1330.</title>
        <authorList>
            <person name="Tae H."/>
            <person name="Shallom S."/>
            <person name="Settlage R."/>
            <person name="Preston D."/>
            <person name="Adams L.G."/>
            <person name="Garner H.R."/>
        </authorList>
    </citation>
    <scope>NUCLEOTIDE SEQUENCE [LARGE SCALE GENOMIC DNA]</scope>
    <source>
        <strain>1330</strain>
    </source>
</reference>
<gene>
    <name evidence="1" type="primary">mnmG</name>
    <name evidence="1" type="synonym">gidA</name>
    <name type="ordered locus">BR2061</name>
    <name type="ordered locus">BS1330_I2055</name>
</gene>
<evidence type="ECO:0000255" key="1">
    <source>
        <dbReference type="HAMAP-Rule" id="MF_00129"/>
    </source>
</evidence>
<feature type="chain" id="PRO_0000117071" description="tRNA uridine 5-carboxymethylaminomethyl modification enzyme MnmG">
    <location>
        <begin position="1"/>
        <end position="636"/>
    </location>
</feature>
<feature type="binding site" evidence="1">
    <location>
        <begin position="15"/>
        <end position="20"/>
    </location>
    <ligand>
        <name>FAD</name>
        <dbReference type="ChEBI" id="CHEBI:57692"/>
    </ligand>
</feature>
<feature type="binding site" evidence="1">
    <location>
        <begin position="274"/>
        <end position="288"/>
    </location>
    <ligand>
        <name>NAD(+)</name>
        <dbReference type="ChEBI" id="CHEBI:57540"/>
    </ligand>
</feature>
<accession>Q8FY28</accession>
<accession>G0K909</accession>